<geneLocation type="mitochondrion"/>
<accession>Q35621</accession>
<protein>
    <recommendedName>
        <fullName>Cytochrome b</fullName>
    </recommendedName>
    <alternativeName>
        <fullName>Complex III subunit 3</fullName>
    </alternativeName>
    <alternativeName>
        <fullName>Complex III subunit III</fullName>
    </alternativeName>
    <alternativeName>
        <fullName>Cytochrome b-c1 complex subunit 3</fullName>
    </alternativeName>
    <alternativeName>
        <fullName>Ubiquinol-cytochrome-c reductase complex cytochrome b subunit</fullName>
    </alternativeName>
</protein>
<keyword id="KW-0249">Electron transport</keyword>
<keyword id="KW-0349">Heme</keyword>
<keyword id="KW-0408">Iron</keyword>
<keyword id="KW-0472">Membrane</keyword>
<keyword id="KW-0479">Metal-binding</keyword>
<keyword id="KW-0496">Mitochondrion</keyword>
<keyword id="KW-0999">Mitochondrion inner membrane</keyword>
<keyword id="KW-0679">Respiratory chain</keyword>
<keyword id="KW-0812">Transmembrane</keyword>
<keyword id="KW-1133">Transmembrane helix</keyword>
<keyword id="KW-0813">Transport</keyword>
<keyword id="KW-0830">Ubiquinone</keyword>
<dbReference type="EMBL" id="U25736">
    <property type="protein sequence ID" value="AAB38163.1"/>
    <property type="molecule type" value="Genomic_DNA"/>
</dbReference>
<dbReference type="SMR" id="Q35621"/>
<dbReference type="GO" id="GO:0005743">
    <property type="term" value="C:mitochondrial inner membrane"/>
    <property type="evidence" value="ECO:0007669"/>
    <property type="project" value="UniProtKB-SubCell"/>
</dbReference>
<dbReference type="GO" id="GO:0045275">
    <property type="term" value="C:respiratory chain complex III"/>
    <property type="evidence" value="ECO:0007669"/>
    <property type="project" value="InterPro"/>
</dbReference>
<dbReference type="GO" id="GO:0046872">
    <property type="term" value="F:metal ion binding"/>
    <property type="evidence" value="ECO:0007669"/>
    <property type="project" value="UniProtKB-KW"/>
</dbReference>
<dbReference type="GO" id="GO:0008121">
    <property type="term" value="F:ubiquinol-cytochrome-c reductase activity"/>
    <property type="evidence" value="ECO:0007669"/>
    <property type="project" value="InterPro"/>
</dbReference>
<dbReference type="GO" id="GO:0006122">
    <property type="term" value="P:mitochondrial electron transport, ubiquinol to cytochrome c"/>
    <property type="evidence" value="ECO:0007669"/>
    <property type="project" value="TreeGrafter"/>
</dbReference>
<dbReference type="CDD" id="cd00290">
    <property type="entry name" value="cytochrome_b_C"/>
    <property type="match status" value="1"/>
</dbReference>
<dbReference type="CDD" id="cd00284">
    <property type="entry name" value="Cytochrome_b_N"/>
    <property type="match status" value="1"/>
</dbReference>
<dbReference type="FunFam" id="1.20.810.10:FF:000002">
    <property type="entry name" value="Cytochrome b"/>
    <property type="match status" value="1"/>
</dbReference>
<dbReference type="Gene3D" id="1.20.810.10">
    <property type="entry name" value="Cytochrome Bc1 Complex, Chain C"/>
    <property type="match status" value="1"/>
</dbReference>
<dbReference type="InterPro" id="IPR005798">
    <property type="entry name" value="Cyt_b/b6_C"/>
</dbReference>
<dbReference type="InterPro" id="IPR036150">
    <property type="entry name" value="Cyt_b/b6_C_sf"/>
</dbReference>
<dbReference type="InterPro" id="IPR005797">
    <property type="entry name" value="Cyt_b/b6_N"/>
</dbReference>
<dbReference type="InterPro" id="IPR027387">
    <property type="entry name" value="Cytb/b6-like_sf"/>
</dbReference>
<dbReference type="InterPro" id="IPR030689">
    <property type="entry name" value="Cytochrome_b"/>
</dbReference>
<dbReference type="InterPro" id="IPR048260">
    <property type="entry name" value="Cytochrome_b_C_euk/bac"/>
</dbReference>
<dbReference type="InterPro" id="IPR048259">
    <property type="entry name" value="Cytochrome_b_N_euk/bac"/>
</dbReference>
<dbReference type="InterPro" id="IPR016174">
    <property type="entry name" value="Di-haem_cyt_TM"/>
</dbReference>
<dbReference type="PANTHER" id="PTHR19271">
    <property type="entry name" value="CYTOCHROME B"/>
    <property type="match status" value="1"/>
</dbReference>
<dbReference type="PANTHER" id="PTHR19271:SF16">
    <property type="entry name" value="CYTOCHROME B"/>
    <property type="match status" value="1"/>
</dbReference>
<dbReference type="Pfam" id="PF00032">
    <property type="entry name" value="Cytochrom_B_C"/>
    <property type="match status" value="1"/>
</dbReference>
<dbReference type="Pfam" id="PF00033">
    <property type="entry name" value="Cytochrome_B"/>
    <property type="match status" value="1"/>
</dbReference>
<dbReference type="PIRSF" id="PIRSF038885">
    <property type="entry name" value="COB"/>
    <property type="match status" value="1"/>
</dbReference>
<dbReference type="SUPFAM" id="SSF81648">
    <property type="entry name" value="a domain/subunit of cytochrome bc1 complex (Ubiquinol-cytochrome c reductase)"/>
    <property type="match status" value="1"/>
</dbReference>
<dbReference type="SUPFAM" id="SSF81342">
    <property type="entry name" value="Transmembrane di-heme cytochromes"/>
    <property type="match status" value="1"/>
</dbReference>
<dbReference type="PROSITE" id="PS51003">
    <property type="entry name" value="CYTB_CTER"/>
    <property type="match status" value="1"/>
</dbReference>
<dbReference type="PROSITE" id="PS51002">
    <property type="entry name" value="CYTB_NTER"/>
    <property type="match status" value="1"/>
</dbReference>
<feature type="chain" id="PRO_0000061356" description="Cytochrome b">
    <location>
        <begin position="1"/>
        <end position="380"/>
    </location>
</feature>
<feature type="transmembrane region" description="Helical" evidence="2">
    <location>
        <begin position="34"/>
        <end position="54"/>
    </location>
</feature>
<feature type="transmembrane region" description="Helical" evidence="2">
    <location>
        <begin position="78"/>
        <end position="99"/>
    </location>
</feature>
<feature type="transmembrane region" description="Helical" evidence="2">
    <location>
        <begin position="114"/>
        <end position="134"/>
    </location>
</feature>
<feature type="transmembrane region" description="Helical" evidence="2">
    <location>
        <begin position="179"/>
        <end position="199"/>
    </location>
</feature>
<feature type="transmembrane region" description="Helical" evidence="2">
    <location>
        <begin position="227"/>
        <end position="247"/>
    </location>
</feature>
<feature type="transmembrane region" description="Helical" evidence="2">
    <location>
        <begin position="289"/>
        <end position="309"/>
    </location>
</feature>
<feature type="transmembrane region" description="Helical" evidence="2">
    <location>
        <begin position="321"/>
        <end position="341"/>
    </location>
</feature>
<feature type="transmembrane region" description="Helical" evidence="2">
    <location>
        <begin position="348"/>
        <end position="368"/>
    </location>
</feature>
<feature type="binding site" description="axial binding residue" evidence="2">
    <location>
        <position position="84"/>
    </location>
    <ligand>
        <name>heme b</name>
        <dbReference type="ChEBI" id="CHEBI:60344"/>
        <label>b562</label>
    </ligand>
    <ligandPart>
        <name>Fe</name>
        <dbReference type="ChEBI" id="CHEBI:18248"/>
    </ligandPart>
</feature>
<feature type="binding site" description="axial binding residue" evidence="2">
    <location>
        <position position="98"/>
    </location>
    <ligand>
        <name>heme b</name>
        <dbReference type="ChEBI" id="CHEBI:60344"/>
        <label>b566</label>
    </ligand>
    <ligandPart>
        <name>Fe</name>
        <dbReference type="ChEBI" id="CHEBI:18248"/>
    </ligandPart>
</feature>
<feature type="binding site" description="axial binding residue" evidence="2">
    <location>
        <position position="183"/>
    </location>
    <ligand>
        <name>heme b</name>
        <dbReference type="ChEBI" id="CHEBI:60344"/>
        <label>b562</label>
    </ligand>
    <ligandPart>
        <name>Fe</name>
        <dbReference type="ChEBI" id="CHEBI:18248"/>
    </ligandPart>
</feature>
<feature type="binding site" description="axial binding residue" evidence="2">
    <location>
        <position position="197"/>
    </location>
    <ligand>
        <name>heme b</name>
        <dbReference type="ChEBI" id="CHEBI:60344"/>
        <label>b566</label>
    </ligand>
    <ligandPart>
        <name>Fe</name>
        <dbReference type="ChEBI" id="CHEBI:18248"/>
    </ligandPart>
</feature>
<feature type="binding site" evidence="2">
    <location>
        <position position="202"/>
    </location>
    <ligand>
        <name>a ubiquinone</name>
        <dbReference type="ChEBI" id="CHEBI:16389"/>
    </ligand>
</feature>
<reference key="1">
    <citation type="journal article" date="1996" name="Mol. Phylogenet. Evol.">
        <title>Phylogenetic relationships among the major lineages of the birds-of-paradise (paradisaeidae) using mitochondrial DNA gene sequences.</title>
        <authorList>
            <person name="Nunn G.B."/>
            <person name="Cracraft J."/>
        </authorList>
    </citation>
    <scope>NUCLEOTIDE SEQUENCE [GENOMIC DNA]</scope>
</reference>
<comment type="function">
    <text evidence="2">Component of the ubiquinol-cytochrome c reductase complex (complex III or cytochrome b-c1 complex) that is part of the mitochondrial respiratory chain. The b-c1 complex mediates electron transfer from ubiquinol to cytochrome c. Contributes to the generation of a proton gradient across the mitochondrial membrane that is then used for ATP synthesis.</text>
</comment>
<comment type="cofactor">
    <cofactor evidence="2">
        <name>heme b</name>
        <dbReference type="ChEBI" id="CHEBI:60344"/>
    </cofactor>
    <text evidence="2">Binds 2 heme b groups non-covalently.</text>
</comment>
<comment type="subunit">
    <text evidence="2">The cytochrome bc1 complex contains 11 subunits: 3 respiratory subunits (MT-CYB, CYC1 and UQCRFS1), 2 core proteins (UQCRC1 and UQCRC2) and 6 low-molecular weight proteins (UQCRH/QCR6, UQCRB/QCR7, UQCRQ/QCR8, UQCR10/QCR9, UQCR11/QCR10 and a cleavage product of UQCRFS1). This cytochrome bc1 complex then forms a dimer.</text>
</comment>
<comment type="subcellular location">
    <subcellularLocation>
        <location evidence="2">Mitochondrion inner membrane</location>
        <topology evidence="2">Multi-pass membrane protein</topology>
    </subcellularLocation>
</comment>
<comment type="miscellaneous">
    <text evidence="1">Heme 1 (or BL or b562) is low-potential and absorbs at about 562 nm, and heme 2 (or BH or b566) is high-potential and absorbs at about 566 nm.</text>
</comment>
<comment type="similarity">
    <text evidence="3 4">Belongs to the cytochrome b family.</text>
</comment>
<comment type="caution">
    <text evidence="2">The full-length protein contains only eight transmembrane helices, not nine as predicted by bioinformatics tools.</text>
</comment>
<proteinExistence type="inferred from homology"/>
<name>CYB_PARRB</name>
<gene>
    <name type="primary">MT-CYB</name>
    <name type="synonym">COB</name>
    <name type="synonym">CYTB</name>
    <name type="synonym">MTCYB</name>
</gene>
<organism>
    <name type="scientific">Paradisaea rubra</name>
    <name type="common">Red bird of paradise</name>
    <dbReference type="NCBI Taxonomy" id="39963"/>
    <lineage>
        <taxon>Eukaryota</taxon>
        <taxon>Metazoa</taxon>
        <taxon>Chordata</taxon>
        <taxon>Craniata</taxon>
        <taxon>Vertebrata</taxon>
        <taxon>Euteleostomi</taxon>
        <taxon>Archelosauria</taxon>
        <taxon>Archosauria</taxon>
        <taxon>Dinosauria</taxon>
        <taxon>Saurischia</taxon>
        <taxon>Theropoda</taxon>
        <taxon>Coelurosauria</taxon>
        <taxon>Aves</taxon>
        <taxon>Neognathae</taxon>
        <taxon>Neoaves</taxon>
        <taxon>Telluraves</taxon>
        <taxon>Australaves</taxon>
        <taxon>Passeriformes</taxon>
        <taxon>Corvoidea</taxon>
        <taxon>Paradisaeidae</taxon>
        <taxon>Paradisaea</taxon>
    </lineage>
</organism>
<sequence>MALNLRKNHPLLKIINDSLIDLPTPSNISIWWNFGSLLGICLVTQIITGLLLAAHYTADTSLAFNSVAHMCRNVQFGWLIRNLHANGASLFFICIYLHIGRGFYYGSYLNKETWNIGVILLLTLMATAFVGYVLPWGQMSFWGATVITNLFSAIPYIGQTLVEWAWGGFSVDNPTLTRFFALHFLLPFVIAGLTLVHLTFLHETGSNNPLGIPSDCDKIPFHPYYSIKDILGFALMLISLATLALFSPNLLGDPENFTPANPLATPPHIKPEWYFLFAYAILRSIPNKLGGVLALAASVLILFLIPLLHTSKQRSMTFRPLSQILFWILVTDLLILTWVGSQPVEHPFIIIGQLASFSYFMIILVLFPIVGALENKLLNL</sequence>
<evidence type="ECO:0000250" key="1"/>
<evidence type="ECO:0000250" key="2">
    <source>
        <dbReference type="UniProtKB" id="P00157"/>
    </source>
</evidence>
<evidence type="ECO:0000255" key="3">
    <source>
        <dbReference type="PROSITE-ProRule" id="PRU00967"/>
    </source>
</evidence>
<evidence type="ECO:0000255" key="4">
    <source>
        <dbReference type="PROSITE-ProRule" id="PRU00968"/>
    </source>
</evidence>